<dbReference type="EMBL" id="CP000569">
    <property type="protein sequence ID" value="ABN74399.1"/>
    <property type="molecule type" value="Genomic_DNA"/>
</dbReference>
<dbReference type="RefSeq" id="WP_005618814.1">
    <property type="nucleotide sequence ID" value="NC_009053.1"/>
</dbReference>
<dbReference type="SMR" id="A3N1W3"/>
<dbReference type="STRING" id="416269.APL_1315"/>
<dbReference type="EnsemblBacteria" id="ABN74399">
    <property type="protein sequence ID" value="ABN74399"/>
    <property type="gene ID" value="APL_1315"/>
</dbReference>
<dbReference type="KEGG" id="apl:APL_1315"/>
<dbReference type="eggNOG" id="COG1281">
    <property type="taxonomic scope" value="Bacteria"/>
</dbReference>
<dbReference type="HOGENOM" id="CLU_054493_0_0_6"/>
<dbReference type="Proteomes" id="UP000001432">
    <property type="component" value="Chromosome"/>
</dbReference>
<dbReference type="GO" id="GO:0005737">
    <property type="term" value="C:cytoplasm"/>
    <property type="evidence" value="ECO:0007669"/>
    <property type="project" value="UniProtKB-SubCell"/>
</dbReference>
<dbReference type="GO" id="GO:0044183">
    <property type="term" value="F:protein folding chaperone"/>
    <property type="evidence" value="ECO:0007669"/>
    <property type="project" value="TreeGrafter"/>
</dbReference>
<dbReference type="GO" id="GO:0051082">
    <property type="term" value="F:unfolded protein binding"/>
    <property type="evidence" value="ECO:0007669"/>
    <property type="project" value="UniProtKB-UniRule"/>
</dbReference>
<dbReference type="GO" id="GO:0042026">
    <property type="term" value="P:protein refolding"/>
    <property type="evidence" value="ECO:0007669"/>
    <property type="project" value="TreeGrafter"/>
</dbReference>
<dbReference type="CDD" id="cd00498">
    <property type="entry name" value="Hsp33"/>
    <property type="match status" value="1"/>
</dbReference>
<dbReference type="Gene3D" id="1.10.287.480">
    <property type="entry name" value="helix hairpin bin"/>
    <property type="match status" value="1"/>
</dbReference>
<dbReference type="Gene3D" id="3.55.30.10">
    <property type="entry name" value="Hsp33 domain"/>
    <property type="match status" value="1"/>
</dbReference>
<dbReference type="Gene3D" id="3.90.1280.10">
    <property type="entry name" value="HSP33 redox switch-like"/>
    <property type="match status" value="1"/>
</dbReference>
<dbReference type="HAMAP" id="MF_00117">
    <property type="entry name" value="HslO"/>
    <property type="match status" value="1"/>
</dbReference>
<dbReference type="InterPro" id="IPR000397">
    <property type="entry name" value="Heat_shock_Hsp33"/>
</dbReference>
<dbReference type="InterPro" id="IPR016154">
    <property type="entry name" value="Heat_shock_Hsp33_C"/>
</dbReference>
<dbReference type="InterPro" id="IPR016153">
    <property type="entry name" value="Heat_shock_Hsp33_N"/>
</dbReference>
<dbReference type="InterPro" id="IPR023212">
    <property type="entry name" value="Hsp33_helix_hairpin_bin_dom_sf"/>
</dbReference>
<dbReference type="NCBIfam" id="NF001033">
    <property type="entry name" value="PRK00114.1"/>
    <property type="match status" value="1"/>
</dbReference>
<dbReference type="PANTHER" id="PTHR30111">
    <property type="entry name" value="33 KDA CHAPERONIN"/>
    <property type="match status" value="1"/>
</dbReference>
<dbReference type="PANTHER" id="PTHR30111:SF1">
    <property type="entry name" value="33 KDA CHAPERONIN"/>
    <property type="match status" value="1"/>
</dbReference>
<dbReference type="Pfam" id="PF01430">
    <property type="entry name" value="HSP33"/>
    <property type="match status" value="1"/>
</dbReference>
<dbReference type="PIRSF" id="PIRSF005261">
    <property type="entry name" value="Heat_shock_Hsp33"/>
    <property type="match status" value="1"/>
</dbReference>
<dbReference type="SUPFAM" id="SSF64397">
    <property type="entry name" value="Hsp33 domain"/>
    <property type="match status" value="1"/>
</dbReference>
<dbReference type="SUPFAM" id="SSF118352">
    <property type="entry name" value="HSP33 redox switch-like"/>
    <property type="match status" value="1"/>
</dbReference>
<sequence>MSYTKDNDKLYRYLFQNRAVRGEWVRLNDTFTETLNTHQYPKAVQNLLGEMLVATSLLTAIMKFEGTITVQIQGDGPLKLAVVNGNEKQQLRALARTQAEIADNASLSEMIGNGVLVISIMPNDGERYQGVIALDKPTIRECLEDYFIRSEQLQTHLVIRTGEYEGKAVAGGLLLQIMPDGTGTPEDFEHLMTLAETVKDEELFGLEAEELLFRLYHEEQVEVYPPQETEFHCGCSRGRSGNAILLLPMEEIDEMLAEKNGVIDMQCECCGTQYFFDKNAIMEFKQEADKLNQLGL</sequence>
<comment type="function">
    <text evidence="1">Redox regulated molecular chaperone. Protects both thermally unfolding and oxidatively damaged proteins from irreversible aggregation. Plays an important role in the bacterial defense system toward oxidative stress.</text>
</comment>
<comment type="subcellular location">
    <subcellularLocation>
        <location evidence="1">Cytoplasm</location>
    </subcellularLocation>
</comment>
<comment type="PTM">
    <text evidence="1">Under oxidizing conditions two disulfide bonds are formed involving the reactive cysteines. Under reducing conditions zinc is bound to the reactive cysteines and the protein is inactive.</text>
</comment>
<comment type="similarity">
    <text evidence="1">Belongs to the HSP33 family.</text>
</comment>
<protein>
    <recommendedName>
        <fullName evidence="1">33 kDa chaperonin</fullName>
    </recommendedName>
    <alternativeName>
        <fullName evidence="1">Heat shock protein 33 homolog</fullName>
        <shortName evidence="1">HSP33</shortName>
    </alternativeName>
</protein>
<reference key="1">
    <citation type="journal article" date="2008" name="J. Bacteriol.">
        <title>The complete genome sequence of Actinobacillus pleuropneumoniae L20 (serotype 5b).</title>
        <authorList>
            <person name="Foote S.J."/>
            <person name="Bosse J.T."/>
            <person name="Bouevitch A.B."/>
            <person name="Langford P.R."/>
            <person name="Young N.M."/>
            <person name="Nash J.H.E."/>
        </authorList>
    </citation>
    <scope>NUCLEOTIDE SEQUENCE [LARGE SCALE GENOMIC DNA]</scope>
    <source>
        <strain>L20</strain>
    </source>
</reference>
<accession>A3N1W3</accession>
<name>HSLO_ACTP2</name>
<feature type="chain" id="PRO_1000015529" description="33 kDa chaperonin">
    <location>
        <begin position="1"/>
        <end position="296"/>
    </location>
</feature>
<feature type="disulfide bond" description="Redox-active" evidence="1">
    <location>
        <begin position="233"/>
        <end position="235"/>
    </location>
</feature>
<feature type="disulfide bond" description="Redox-active" evidence="1">
    <location>
        <begin position="267"/>
        <end position="270"/>
    </location>
</feature>
<gene>
    <name evidence="1" type="primary">hslO</name>
    <name type="ordered locus">APL_1315</name>
</gene>
<keyword id="KW-0143">Chaperone</keyword>
<keyword id="KW-0963">Cytoplasm</keyword>
<keyword id="KW-1015">Disulfide bond</keyword>
<keyword id="KW-0676">Redox-active center</keyword>
<keyword id="KW-1185">Reference proteome</keyword>
<keyword id="KW-0346">Stress response</keyword>
<keyword id="KW-0862">Zinc</keyword>
<organism>
    <name type="scientific">Actinobacillus pleuropneumoniae serotype 5b (strain L20)</name>
    <dbReference type="NCBI Taxonomy" id="416269"/>
    <lineage>
        <taxon>Bacteria</taxon>
        <taxon>Pseudomonadati</taxon>
        <taxon>Pseudomonadota</taxon>
        <taxon>Gammaproteobacteria</taxon>
        <taxon>Pasteurellales</taxon>
        <taxon>Pasteurellaceae</taxon>
        <taxon>Actinobacillus</taxon>
    </lineage>
</organism>
<evidence type="ECO:0000255" key="1">
    <source>
        <dbReference type="HAMAP-Rule" id="MF_00117"/>
    </source>
</evidence>
<proteinExistence type="inferred from homology"/>